<accession>A6TQJ6</accession>
<reference key="1">
    <citation type="journal article" date="2016" name="Genome Announc.">
        <title>Complete genome sequence of Alkaliphilus metalliredigens strain QYMF, an alkaliphilic and metal-reducing bacterium isolated from borax-contaminated leachate ponds.</title>
        <authorList>
            <person name="Hwang C."/>
            <person name="Copeland A."/>
            <person name="Lucas S."/>
            <person name="Lapidus A."/>
            <person name="Barry K."/>
            <person name="Detter J.C."/>
            <person name="Glavina Del Rio T."/>
            <person name="Hammon N."/>
            <person name="Israni S."/>
            <person name="Dalin E."/>
            <person name="Tice H."/>
            <person name="Pitluck S."/>
            <person name="Chertkov O."/>
            <person name="Brettin T."/>
            <person name="Bruce D."/>
            <person name="Han C."/>
            <person name="Schmutz J."/>
            <person name="Larimer F."/>
            <person name="Land M.L."/>
            <person name="Hauser L."/>
            <person name="Kyrpides N."/>
            <person name="Mikhailova N."/>
            <person name="Ye Q."/>
            <person name="Zhou J."/>
            <person name="Richardson P."/>
            <person name="Fields M.W."/>
        </authorList>
    </citation>
    <scope>NUCLEOTIDE SEQUENCE [LARGE SCALE GENOMIC DNA]</scope>
    <source>
        <strain>QYMF</strain>
    </source>
</reference>
<feature type="chain" id="PRO_0000385685" description="GTPase Obg">
    <location>
        <begin position="1"/>
        <end position="427"/>
    </location>
</feature>
<feature type="domain" description="Obg" evidence="3">
    <location>
        <begin position="1"/>
        <end position="158"/>
    </location>
</feature>
<feature type="domain" description="OBG-type G" evidence="1">
    <location>
        <begin position="159"/>
        <end position="330"/>
    </location>
</feature>
<feature type="domain" description="OCT" evidence="2">
    <location>
        <begin position="347"/>
        <end position="427"/>
    </location>
</feature>
<feature type="binding site" evidence="1">
    <location>
        <begin position="165"/>
        <end position="172"/>
    </location>
    <ligand>
        <name>GTP</name>
        <dbReference type="ChEBI" id="CHEBI:37565"/>
    </ligand>
</feature>
<feature type="binding site" evidence="1">
    <location>
        <position position="172"/>
    </location>
    <ligand>
        <name>Mg(2+)</name>
        <dbReference type="ChEBI" id="CHEBI:18420"/>
    </ligand>
</feature>
<feature type="binding site" evidence="1">
    <location>
        <begin position="190"/>
        <end position="194"/>
    </location>
    <ligand>
        <name>GTP</name>
        <dbReference type="ChEBI" id="CHEBI:37565"/>
    </ligand>
</feature>
<feature type="binding site" evidence="1">
    <location>
        <position position="192"/>
    </location>
    <ligand>
        <name>Mg(2+)</name>
        <dbReference type="ChEBI" id="CHEBI:18420"/>
    </ligand>
</feature>
<feature type="binding site" evidence="1">
    <location>
        <begin position="212"/>
        <end position="215"/>
    </location>
    <ligand>
        <name>GTP</name>
        <dbReference type="ChEBI" id="CHEBI:37565"/>
    </ligand>
</feature>
<feature type="binding site" evidence="1">
    <location>
        <begin position="282"/>
        <end position="285"/>
    </location>
    <ligand>
        <name>GTP</name>
        <dbReference type="ChEBI" id="CHEBI:37565"/>
    </ligand>
</feature>
<feature type="binding site" evidence="1">
    <location>
        <begin position="311"/>
        <end position="313"/>
    </location>
    <ligand>
        <name>GTP</name>
        <dbReference type="ChEBI" id="CHEBI:37565"/>
    </ligand>
</feature>
<gene>
    <name evidence="1" type="primary">obg</name>
    <name type="ordered locus">Amet_2307</name>
</gene>
<keyword id="KW-0963">Cytoplasm</keyword>
<keyword id="KW-0342">GTP-binding</keyword>
<keyword id="KW-0378">Hydrolase</keyword>
<keyword id="KW-0460">Magnesium</keyword>
<keyword id="KW-0479">Metal-binding</keyword>
<keyword id="KW-0547">Nucleotide-binding</keyword>
<keyword id="KW-1185">Reference proteome</keyword>
<dbReference type="EC" id="3.6.5.-" evidence="1"/>
<dbReference type="EMBL" id="CP000724">
    <property type="protein sequence ID" value="ABR48464.1"/>
    <property type="molecule type" value="Genomic_DNA"/>
</dbReference>
<dbReference type="RefSeq" id="WP_012063439.1">
    <property type="nucleotide sequence ID" value="NC_009633.1"/>
</dbReference>
<dbReference type="SMR" id="A6TQJ6"/>
<dbReference type="STRING" id="293826.Amet_2307"/>
<dbReference type="KEGG" id="amt:Amet_2307"/>
<dbReference type="eggNOG" id="COG0536">
    <property type="taxonomic scope" value="Bacteria"/>
</dbReference>
<dbReference type="HOGENOM" id="CLU_011747_2_1_9"/>
<dbReference type="OrthoDB" id="9807318at2"/>
<dbReference type="Proteomes" id="UP000001572">
    <property type="component" value="Chromosome"/>
</dbReference>
<dbReference type="GO" id="GO:0005737">
    <property type="term" value="C:cytoplasm"/>
    <property type="evidence" value="ECO:0007669"/>
    <property type="project" value="UniProtKB-SubCell"/>
</dbReference>
<dbReference type="GO" id="GO:0005525">
    <property type="term" value="F:GTP binding"/>
    <property type="evidence" value="ECO:0007669"/>
    <property type="project" value="UniProtKB-UniRule"/>
</dbReference>
<dbReference type="GO" id="GO:0003924">
    <property type="term" value="F:GTPase activity"/>
    <property type="evidence" value="ECO:0007669"/>
    <property type="project" value="UniProtKB-UniRule"/>
</dbReference>
<dbReference type="GO" id="GO:0000287">
    <property type="term" value="F:magnesium ion binding"/>
    <property type="evidence" value="ECO:0007669"/>
    <property type="project" value="InterPro"/>
</dbReference>
<dbReference type="GO" id="GO:0042254">
    <property type="term" value="P:ribosome biogenesis"/>
    <property type="evidence" value="ECO:0007669"/>
    <property type="project" value="UniProtKB-UniRule"/>
</dbReference>
<dbReference type="CDD" id="cd01898">
    <property type="entry name" value="Obg"/>
    <property type="match status" value="1"/>
</dbReference>
<dbReference type="FunFam" id="2.70.210.12:FF:000001">
    <property type="entry name" value="GTPase Obg"/>
    <property type="match status" value="1"/>
</dbReference>
<dbReference type="Gene3D" id="3.30.300.350">
    <property type="entry name" value="GTP-binding protein OBG, C-terminal domain"/>
    <property type="match status" value="1"/>
</dbReference>
<dbReference type="Gene3D" id="2.70.210.12">
    <property type="entry name" value="GTP1/OBG domain"/>
    <property type="match status" value="1"/>
</dbReference>
<dbReference type="Gene3D" id="3.40.50.300">
    <property type="entry name" value="P-loop containing nucleotide triphosphate hydrolases"/>
    <property type="match status" value="1"/>
</dbReference>
<dbReference type="HAMAP" id="MF_01454">
    <property type="entry name" value="GTPase_Obg"/>
    <property type="match status" value="1"/>
</dbReference>
<dbReference type="InterPro" id="IPR031167">
    <property type="entry name" value="G_OBG"/>
</dbReference>
<dbReference type="InterPro" id="IPR006073">
    <property type="entry name" value="GTP-bd"/>
</dbReference>
<dbReference type="InterPro" id="IPR014100">
    <property type="entry name" value="GTP-bd_Obg/CgtA"/>
</dbReference>
<dbReference type="InterPro" id="IPR036346">
    <property type="entry name" value="GTP-bd_prot_GTP1/OBG_C_sf"/>
</dbReference>
<dbReference type="InterPro" id="IPR006074">
    <property type="entry name" value="GTP1-OBG_CS"/>
</dbReference>
<dbReference type="InterPro" id="IPR006169">
    <property type="entry name" value="GTP1_OBG_dom"/>
</dbReference>
<dbReference type="InterPro" id="IPR036726">
    <property type="entry name" value="GTP1_OBG_dom_sf"/>
</dbReference>
<dbReference type="InterPro" id="IPR045086">
    <property type="entry name" value="OBG_GTPase"/>
</dbReference>
<dbReference type="InterPro" id="IPR015349">
    <property type="entry name" value="OCT_dom"/>
</dbReference>
<dbReference type="InterPro" id="IPR027417">
    <property type="entry name" value="P-loop_NTPase"/>
</dbReference>
<dbReference type="InterPro" id="IPR005225">
    <property type="entry name" value="Small_GTP-bd"/>
</dbReference>
<dbReference type="NCBIfam" id="TIGR02729">
    <property type="entry name" value="Obg_CgtA"/>
    <property type="match status" value="1"/>
</dbReference>
<dbReference type="NCBIfam" id="TIGR03595">
    <property type="entry name" value="Obg_CgtA_exten"/>
    <property type="match status" value="1"/>
</dbReference>
<dbReference type="NCBIfam" id="NF008954">
    <property type="entry name" value="PRK12296.1"/>
    <property type="match status" value="1"/>
</dbReference>
<dbReference type="NCBIfam" id="NF008955">
    <property type="entry name" value="PRK12297.1"/>
    <property type="match status" value="1"/>
</dbReference>
<dbReference type="NCBIfam" id="NF008956">
    <property type="entry name" value="PRK12299.1"/>
    <property type="match status" value="1"/>
</dbReference>
<dbReference type="NCBIfam" id="TIGR00231">
    <property type="entry name" value="small_GTP"/>
    <property type="match status" value="1"/>
</dbReference>
<dbReference type="PANTHER" id="PTHR11702">
    <property type="entry name" value="DEVELOPMENTALLY REGULATED GTP-BINDING PROTEIN-RELATED"/>
    <property type="match status" value="1"/>
</dbReference>
<dbReference type="PANTHER" id="PTHR11702:SF31">
    <property type="entry name" value="MITOCHONDRIAL RIBOSOME-ASSOCIATED GTPASE 2"/>
    <property type="match status" value="1"/>
</dbReference>
<dbReference type="Pfam" id="PF09269">
    <property type="entry name" value="DUF1967"/>
    <property type="match status" value="1"/>
</dbReference>
<dbReference type="Pfam" id="PF01018">
    <property type="entry name" value="GTP1_OBG"/>
    <property type="match status" value="1"/>
</dbReference>
<dbReference type="Pfam" id="PF01926">
    <property type="entry name" value="MMR_HSR1"/>
    <property type="match status" value="1"/>
</dbReference>
<dbReference type="PIRSF" id="PIRSF002401">
    <property type="entry name" value="GTP_bd_Obg/CgtA"/>
    <property type="match status" value="1"/>
</dbReference>
<dbReference type="PRINTS" id="PR00326">
    <property type="entry name" value="GTP1OBG"/>
</dbReference>
<dbReference type="SUPFAM" id="SSF102741">
    <property type="entry name" value="Obg GTP-binding protein C-terminal domain"/>
    <property type="match status" value="1"/>
</dbReference>
<dbReference type="SUPFAM" id="SSF82051">
    <property type="entry name" value="Obg GTP-binding protein N-terminal domain"/>
    <property type="match status" value="1"/>
</dbReference>
<dbReference type="SUPFAM" id="SSF52540">
    <property type="entry name" value="P-loop containing nucleoside triphosphate hydrolases"/>
    <property type="match status" value="1"/>
</dbReference>
<dbReference type="PROSITE" id="PS51710">
    <property type="entry name" value="G_OBG"/>
    <property type="match status" value="1"/>
</dbReference>
<dbReference type="PROSITE" id="PS00905">
    <property type="entry name" value="GTP1_OBG"/>
    <property type="match status" value="1"/>
</dbReference>
<dbReference type="PROSITE" id="PS51883">
    <property type="entry name" value="OBG"/>
    <property type="match status" value="1"/>
</dbReference>
<dbReference type="PROSITE" id="PS51881">
    <property type="entry name" value="OCT"/>
    <property type="match status" value="1"/>
</dbReference>
<sequence>MFIDKAKIHLKSGKGGDGAVAFRKEKYVPAGGPAGGDGGKGGNIIFVVDEGMRTLMDFRYKMHYSAENGENGKGRMQYGKDGEDLILRVPPGTIIREEKTGHLVADLTQPKERRIIAKGGKGGKGNVHFKSATRQAPQFAIAGVKGEELTVTLELKLIADVGLVGFPNVGKSTLLSVVTSAKPKIADYHFTTLTPNLGVVRTKRGDSFVLADIPGLIEGAHEGTGLGHEFLRHVERTKLLIHVLDVAGIEGRDPLEDFEKINEELKLYNEKLSTRPQVVAANKTDVMGENENLKKLTEALAEKGIEVFPVSAATKQGLDELLDYVSIKLKELEDTEVELEEVEEEKLYELKEKDTNQFTVKKEDDTYIVEGDFLERLIMSTNFEDMDSLTYFQKVLRRKGIIDELKKLGIEDGEFVKIYDVEFEYFH</sequence>
<evidence type="ECO:0000255" key="1">
    <source>
        <dbReference type="HAMAP-Rule" id="MF_01454"/>
    </source>
</evidence>
<evidence type="ECO:0000255" key="2">
    <source>
        <dbReference type="PROSITE-ProRule" id="PRU01229"/>
    </source>
</evidence>
<evidence type="ECO:0000255" key="3">
    <source>
        <dbReference type="PROSITE-ProRule" id="PRU01231"/>
    </source>
</evidence>
<comment type="function">
    <text evidence="1">An essential GTPase which binds GTP, GDP and possibly (p)ppGpp with moderate affinity, with high nucleotide exchange rates and a fairly low GTP hydrolysis rate. Plays a role in control of the cell cycle, stress response, ribosome biogenesis and in those bacteria that undergo differentiation, in morphogenesis control.</text>
</comment>
<comment type="cofactor">
    <cofactor evidence="1">
        <name>Mg(2+)</name>
        <dbReference type="ChEBI" id="CHEBI:18420"/>
    </cofactor>
</comment>
<comment type="subunit">
    <text evidence="1">Monomer.</text>
</comment>
<comment type="subcellular location">
    <subcellularLocation>
        <location evidence="1">Cytoplasm</location>
    </subcellularLocation>
</comment>
<comment type="similarity">
    <text evidence="1">Belongs to the TRAFAC class OBG-HflX-like GTPase superfamily. OBG GTPase family.</text>
</comment>
<name>OBG_ALKMQ</name>
<organism>
    <name type="scientific">Alkaliphilus metalliredigens (strain QYMF)</name>
    <dbReference type="NCBI Taxonomy" id="293826"/>
    <lineage>
        <taxon>Bacteria</taxon>
        <taxon>Bacillati</taxon>
        <taxon>Bacillota</taxon>
        <taxon>Clostridia</taxon>
        <taxon>Peptostreptococcales</taxon>
        <taxon>Natronincolaceae</taxon>
        <taxon>Alkaliphilus</taxon>
    </lineage>
</organism>
<proteinExistence type="inferred from homology"/>
<protein>
    <recommendedName>
        <fullName evidence="1">GTPase Obg</fullName>
        <ecNumber evidence="1">3.6.5.-</ecNumber>
    </recommendedName>
    <alternativeName>
        <fullName evidence="1">GTP-binding protein Obg</fullName>
    </alternativeName>
</protein>